<protein>
    <recommendedName>
        <fullName>Vasotocin</fullName>
    </recommendedName>
</protein>
<feature type="peptide" id="PRO_0000044089" description="Vasotocin">
    <location>
        <begin position="1"/>
        <end position="9"/>
    </location>
</feature>
<feature type="modified residue" description="Glycine amide" evidence="1">
    <location>
        <position position="9"/>
    </location>
</feature>
<feature type="disulfide bond">
    <location>
        <begin position="1"/>
        <end position="6"/>
    </location>
</feature>
<evidence type="ECO:0000269" key="1">
    <source>
    </source>
</evidence>
<evidence type="ECO:0000305" key="2"/>
<name>OXYT_PETMA</name>
<reference key="1">
    <citation type="journal article" date="1988" name="Gen. Comp. Endocrinol.">
        <title>Arginine vasotocin from the pituitary gland of the lamprey (Petromyzon marinus): isolation and amino acid sequence.</title>
        <authorList>
            <person name="Lane T.F."/>
            <person name="Sower S.A."/>
            <person name="Kawauchi H."/>
        </authorList>
    </citation>
    <scope>PROTEIN SEQUENCE</scope>
    <scope>AMIDATION AT GLY-9</scope>
    <source>
        <tissue>Pituitary</tissue>
    </source>
</reference>
<accession>P69129</accession>
<accession>P23879</accession>
<keyword id="KW-0027">Amidation</keyword>
<keyword id="KW-0903">Direct protein sequencing</keyword>
<keyword id="KW-1015">Disulfide bond</keyword>
<keyword id="KW-0372">Hormone</keyword>
<keyword id="KW-0964">Secreted</keyword>
<comment type="function">
    <text>Antidiuretic hormone.</text>
</comment>
<comment type="subcellular location">
    <subcellularLocation>
        <location>Secreted</location>
    </subcellularLocation>
</comment>
<comment type="similarity">
    <text evidence="2">Belongs to the vasopressin/oxytocin family.</text>
</comment>
<proteinExistence type="evidence at protein level"/>
<dbReference type="PIR" id="S06375">
    <property type="entry name" value="S06375"/>
</dbReference>
<dbReference type="Proteomes" id="UP001318040">
    <property type="component" value="Unplaced"/>
</dbReference>
<dbReference type="GO" id="GO:0005576">
    <property type="term" value="C:extracellular region"/>
    <property type="evidence" value="ECO:0007669"/>
    <property type="project" value="UniProtKB-SubCell"/>
</dbReference>
<dbReference type="GO" id="GO:0005185">
    <property type="term" value="F:neurohypophyseal hormone activity"/>
    <property type="evidence" value="ECO:0007669"/>
    <property type="project" value="InterPro"/>
</dbReference>
<dbReference type="InterPro" id="IPR022423">
    <property type="entry name" value="Neurohypophysial_hormone_CS"/>
</dbReference>
<dbReference type="Pfam" id="PF00220">
    <property type="entry name" value="Hormone_4"/>
    <property type="match status" value="1"/>
</dbReference>
<dbReference type="PROSITE" id="PS00264">
    <property type="entry name" value="NEUROHYPOPHYS_HORM"/>
    <property type="match status" value="1"/>
</dbReference>
<sequence length="9" mass="1053">CYIQNCPRG</sequence>
<organism>
    <name type="scientific">Petromyzon marinus</name>
    <name type="common">Sea lamprey</name>
    <dbReference type="NCBI Taxonomy" id="7757"/>
    <lineage>
        <taxon>Eukaryota</taxon>
        <taxon>Metazoa</taxon>
        <taxon>Chordata</taxon>
        <taxon>Craniata</taxon>
        <taxon>Vertebrata</taxon>
        <taxon>Cyclostomata</taxon>
        <taxon>Hyperoartia</taxon>
        <taxon>Petromyzontiformes</taxon>
        <taxon>Petromyzontidae</taxon>
        <taxon>Petromyzon</taxon>
    </lineage>
</organism>